<sequence>ACGGGGGDVGSLISASLFDQMLKYRNDPRCCXXGF</sequence>
<accession>P29137</accession>
<feature type="chain" id="PRO_0000124825" description="Basic endochitinase CH1">
    <location>
        <begin position="1"/>
        <end position="35" status="greater than"/>
    </location>
</feature>
<feature type="non-terminal residue">
    <location>
        <position position="35"/>
    </location>
</feature>
<name>CHI1_CASSA</name>
<dbReference type="EC" id="3.2.1.14"/>
<dbReference type="CAZy" id="GH19">
    <property type="family name" value="Glycoside Hydrolase Family 19"/>
</dbReference>
<dbReference type="GO" id="GO:0008843">
    <property type="term" value="F:endochitinase activity"/>
    <property type="evidence" value="ECO:0007669"/>
    <property type="project" value="UniProtKB-EC"/>
</dbReference>
<dbReference type="GO" id="GO:0006032">
    <property type="term" value="P:chitin catabolic process"/>
    <property type="evidence" value="ECO:0007669"/>
    <property type="project" value="UniProtKB-KW"/>
</dbReference>
<dbReference type="GO" id="GO:0006952">
    <property type="term" value="P:defense response"/>
    <property type="evidence" value="ECO:0007669"/>
    <property type="project" value="UniProtKB-KW"/>
</dbReference>
<dbReference type="GO" id="GO:0000272">
    <property type="term" value="P:polysaccharide catabolic process"/>
    <property type="evidence" value="ECO:0007669"/>
    <property type="project" value="UniProtKB-KW"/>
</dbReference>
<proteinExistence type="evidence at protein level"/>
<comment type="function">
    <text>Defense against chitin-containing fungal pathogens.</text>
</comment>
<comment type="catalytic activity">
    <reaction>
        <text>Random endo-hydrolysis of N-acetyl-beta-D-glucosaminide (1-&gt;4)-beta-linkages in chitin and chitodextrins.</text>
        <dbReference type="EC" id="3.2.1.14"/>
    </reaction>
</comment>
<comment type="similarity">
    <text evidence="1">Belongs to the glycosyl hydrolase 19 family. Chitinase class I subfamily.</text>
</comment>
<organism>
    <name type="scientific">Castanea sativa</name>
    <name type="common">Sweet chestnut</name>
    <dbReference type="NCBI Taxonomy" id="21020"/>
    <lineage>
        <taxon>Eukaryota</taxon>
        <taxon>Viridiplantae</taxon>
        <taxon>Streptophyta</taxon>
        <taxon>Embryophyta</taxon>
        <taxon>Tracheophyta</taxon>
        <taxon>Spermatophyta</taxon>
        <taxon>Magnoliopsida</taxon>
        <taxon>eudicotyledons</taxon>
        <taxon>Gunneridae</taxon>
        <taxon>Pentapetalae</taxon>
        <taxon>rosids</taxon>
        <taxon>fabids</taxon>
        <taxon>Fagales</taxon>
        <taxon>Fagaceae</taxon>
        <taxon>Castanea</taxon>
    </lineage>
</organism>
<evidence type="ECO:0000305" key="1"/>
<protein>
    <recommendedName>
        <fullName>Basic endochitinase CH1</fullName>
        <ecNumber>3.2.1.14</ecNumber>
    </recommendedName>
</protein>
<keyword id="KW-0119">Carbohydrate metabolism</keyword>
<keyword id="KW-0146">Chitin degradation</keyword>
<keyword id="KW-0903">Direct protein sequencing</keyword>
<keyword id="KW-0326">Glycosidase</keyword>
<keyword id="KW-0378">Hydrolase</keyword>
<keyword id="KW-0611">Plant defense</keyword>
<keyword id="KW-0624">Polysaccharide degradation</keyword>
<reference key="1">
    <citation type="journal article" date="1992" name="Plant Physiol.">
        <title>Basic endochitinases are major proteins in Castanea sativa cotyledons.</title>
        <authorList>
            <person name="Collada C."/>
            <person name="Casado R."/>
            <person name="Fraile A."/>
            <person name="Aragoncillo C."/>
        </authorList>
    </citation>
    <scope>PROTEIN SEQUENCE</scope>
    <source>
        <tissue>Cotyledon</tissue>
    </source>
</reference>